<dbReference type="EMBL" id="U73506">
    <property type="protein sequence ID" value="AAB94774.1"/>
    <property type="molecule type" value="Genomic_DNA"/>
</dbReference>
<dbReference type="EMBL" id="AE004091">
    <property type="protein sequence ID" value="AAG04220.1"/>
    <property type="molecule type" value="Genomic_DNA"/>
</dbReference>
<dbReference type="PIR" id="G83540">
    <property type="entry name" value="G83540"/>
</dbReference>
<dbReference type="RefSeq" id="NP_249522.1">
    <property type="nucleotide sequence ID" value="NC_002516.2"/>
</dbReference>
<dbReference type="RefSeq" id="WP_003114220.1">
    <property type="nucleotide sequence ID" value="NZ_QZGE01000007.1"/>
</dbReference>
<dbReference type="SMR" id="P72171"/>
<dbReference type="STRING" id="208964.PA0831"/>
<dbReference type="PaxDb" id="208964-PA0831"/>
<dbReference type="GeneID" id="878384"/>
<dbReference type="KEGG" id="pae:PA0831"/>
<dbReference type="PATRIC" id="fig|208964.12.peg.862"/>
<dbReference type="PseudoCAP" id="PA0831"/>
<dbReference type="HOGENOM" id="CLU_047522_3_1_6"/>
<dbReference type="InParanoid" id="P72171"/>
<dbReference type="OrthoDB" id="5582699at2"/>
<dbReference type="PhylomeDB" id="P72171"/>
<dbReference type="BioCyc" id="PAER208964:G1FZ6-845-MONOMER"/>
<dbReference type="Proteomes" id="UP000002438">
    <property type="component" value="Chromosome"/>
</dbReference>
<dbReference type="GO" id="GO:0003700">
    <property type="term" value="F:DNA-binding transcription factor activity"/>
    <property type="evidence" value="ECO:0000318"/>
    <property type="project" value="GO_Central"/>
</dbReference>
<dbReference type="GO" id="GO:0000976">
    <property type="term" value="F:transcription cis-regulatory region binding"/>
    <property type="evidence" value="ECO:0000318"/>
    <property type="project" value="GO_Central"/>
</dbReference>
<dbReference type="GO" id="GO:0006593">
    <property type="term" value="P:ornithine catabolic process"/>
    <property type="evidence" value="ECO:0000315"/>
    <property type="project" value="PseudoCAP"/>
</dbReference>
<dbReference type="Gene3D" id="1.10.10.60">
    <property type="entry name" value="Homeodomain-like"/>
    <property type="match status" value="1"/>
</dbReference>
<dbReference type="InterPro" id="IPR032687">
    <property type="entry name" value="AraC-type_N"/>
</dbReference>
<dbReference type="InterPro" id="IPR009057">
    <property type="entry name" value="Homeodomain-like_sf"/>
</dbReference>
<dbReference type="InterPro" id="IPR018060">
    <property type="entry name" value="HTH_AraC"/>
</dbReference>
<dbReference type="InterPro" id="IPR020449">
    <property type="entry name" value="Tscrpt_reg_AraC-type_HTH"/>
</dbReference>
<dbReference type="PANTHER" id="PTHR47894">
    <property type="entry name" value="HTH-TYPE TRANSCRIPTIONAL REGULATOR GADX"/>
    <property type="match status" value="1"/>
</dbReference>
<dbReference type="PANTHER" id="PTHR47894:SF1">
    <property type="entry name" value="HTH-TYPE TRANSCRIPTIONAL REGULATOR VQSM"/>
    <property type="match status" value="1"/>
</dbReference>
<dbReference type="Pfam" id="PF12625">
    <property type="entry name" value="Arabinose_bd"/>
    <property type="match status" value="1"/>
</dbReference>
<dbReference type="Pfam" id="PF12833">
    <property type="entry name" value="HTH_18"/>
    <property type="match status" value="1"/>
</dbReference>
<dbReference type="PRINTS" id="PR00032">
    <property type="entry name" value="HTHARAC"/>
</dbReference>
<dbReference type="SMART" id="SM00342">
    <property type="entry name" value="HTH_ARAC"/>
    <property type="match status" value="1"/>
</dbReference>
<dbReference type="SUPFAM" id="SSF46689">
    <property type="entry name" value="Homeodomain-like"/>
    <property type="match status" value="1"/>
</dbReference>
<dbReference type="PROSITE" id="PS01124">
    <property type="entry name" value="HTH_ARAC_FAMILY_2"/>
    <property type="match status" value="1"/>
</dbReference>
<protein>
    <recommendedName>
        <fullName>Ornithine utilization regulator</fullName>
    </recommendedName>
</protein>
<sequence>MKQPLNFTAELVPVAYAEALLDLVAEYGVSRQALFDAARVRPEVLDSPNGRLSFLDFNQLTYSAQALCGEPALGLVLGQRLNVSAHGILGYAVLSSANLGKAIQFALKYYRVLGLAYELELVLDDGRAELRAVESMPLGAASVFAAEGLMATLYSIACFLVGEPLQDVRVGFAYPPPAHARRYAEVFGVAAEFEQPWHWLSMPSEYLERPMALANPATVQMCEQQCEALLATLDVQEGLLTRVRRLLLARPGDFPDLEQAARELHTSGRSLRRHLSSLGTTYQQVLDDVRKRLALQYLTTTQLPLYEIALLLGFNDSSNFRRAFRKWTGKLPSDYREAP</sequence>
<accession>P72171</accession>
<gene>
    <name type="primary">oruR</name>
    <name type="ordered locus">PA0831</name>
</gene>
<keyword id="KW-0010">Activator</keyword>
<keyword id="KW-0238">DNA-binding</keyword>
<keyword id="KW-1185">Reference proteome</keyword>
<keyword id="KW-0804">Transcription</keyword>
<keyword id="KW-0805">Transcription regulation</keyword>
<proteinExistence type="predicted"/>
<name>ORUR_PSEAE</name>
<comment type="function">
    <text>Probably activates the ArgJ gene that encodes ornithine acetyltransferase. Binds to its own promoter-operator region. Probably binds ornithine.</text>
</comment>
<organism>
    <name type="scientific">Pseudomonas aeruginosa (strain ATCC 15692 / DSM 22644 / CIP 104116 / JCM 14847 / LMG 12228 / 1C / PRS 101 / PAO1)</name>
    <dbReference type="NCBI Taxonomy" id="208964"/>
    <lineage>
        <taxon>Bacteria</taxon>
        <taxon>Pseudomonadati</taxon>
        <taxon>Pseudomonadota</taxon>
        <taxon>Gammaproteobacteria</taxon>
        <taxon>Pseudomonadales</taxon>
        <taxon>Pseudomonadaceae</taxon>
        <taxon>Pseudomonas</taxon>
    </lineage>
</organism>
<feature type="chain" id="PRO_0000194543" description="Ornithine utilization regulator">
    <location>
        <begin position="1"/>
        <end position="339"/>
    </location>
</feature>
<feature type="domain" description="HTH araC/xylS-type" evidence="1">
    <location>
        <begin position="241"/>
        <end position="338"/>
    </location>
</feature>
<feature type="DNA-binding region" description="H-T-H motif" evidence="1">
    <location>
        <begin position="258"/>
        <end position="279"/>
    </location>
</feature>
<feature type="DNA-binding region" description="H-T-H motif" evidence="1">
    <location>
        <begin position="305"/>
        <end position="328"/>
    </location>
</feature>
<reference key="1">
    <citation type="journal article" date="1997" name="J. Bacteriol.">
        <title>Regulation of ornithine utilization in Pseudomonas aeruginosa (PAO1) is mediated by a transcriptional regulator, OruR.</title>
        <authorList>
            <person name="Hebert M.D."/>
            <person name="Houghton J.E."/>
        </authorList>
    </citation>
    <scope>NUCLEOTIDE SEQUENCE [GENOMIC DNA]</scope>
    <source>
        <strain>ATCC 15692 / DSM 22644 / CIP 104116 / JCM 14847 / LMG 12228 / 1C / PRS 101 / PAO1</strain>
    </source>
</reference>
<reference key="2">
    <citation type="journal article" date="2000" name="Nature">
        <title>Complete genome sequence of Pseudomonas aeruginosa PAO1, an opportunistic pathogen.</title>
        <authorList>
            <person name="Stover C.K."/>
            <person name="Pham X.-Q.T."/>
            <person name="Erwin A.L."/>
            <person name="Mizoguchi S.D."/>
            <person name="Warrener P."/>
            <person name="Hickey M.J."/>
            <person name="Brinkman F.S.L."/>
            <person name="Hufnagle W.O."/>
            <person name="Kowalik D.J."/>
            <person name="Lagrou M."/>
            <person name="Garber R.L."/>
            <person name="Goltry L."/>
            <person name="Tolentino E."/>
            <person name="Westbrock-Wadman S."/>
            <person name="Yuan Y."/>
            <person name="Brody L.L."/>
            <person name="Coulter S.N."/>
            <person name="Folger K.R."/>
            <person name="Kas A."/>
            <person name="Larbig K."/>
            <person name="Lim R.M."/>
            <person name="Smith K.A."/>
            <person name="Spencer D.H."/>
            <person name="Wong G.K.-S."/>
            <person name="Wu Z."/>
            <person name="Paulsen I.T."/>
            <person name="Reizer J."/>
            <person name="Saier M.H. Jr."/>
            <person name="Hancock R.E.W."/>
            <person name="Lory S."/>
            <person name="Olson M.V."/>
        </authorList>
    </citation>
    <scope>NUCLEOTIDE SEQUENCE [LARGE SCALE GENOMIC DNA]</scope>
    <source>
        <strain>ATCC 15692 / DSM 22644 / CIP 104116 / JCM 14847 / LMG 12228 / 1C / PRS 101 / PAO1</strain>
    </source>
</reference>
<evidence type="ECO:0000255" key="1">
    <source>
        <dbReference type="PROSITE-ProRule" id="PRU00593"/>
    </source>
</evidence>